<evidence type="ECO:0000255" key="1">
    <source>
        <dbReference type="HAMAP-Rule" id="MF_00158"/>
    </source>
</evidence>
<organism>
    <name type="scientific">Nitratiruptor sp. (strain SB155-2)</name>
    <dbReference type="NCBI Taxonomy" id="387092"/>
    <lineage>
        <taxon>Bacteria</taxon>
        <taxon>Pseudomonadati</taxon>
        <taxon>Campylobacterota</taxon>
        <taxon>Epsilonproteobacteria</taxon>
        <taxon>Nautiliales</taxon>
        <taxon>Nitratiruptoraceae</taxon>
        <taxon>Nitratiruptor</taxon>
    </lineage>
</organism>
<dbReference type="EC" id="6.3.2.1" evidence="1"/>
<dbReference type="EMBL" id="AP009178">
    <property type="protein sequence ID" value="BAF70640.1"/>
    <property type="molecule type" value="Genomic_DNA"/>
</dbReference>
<dbReference type="RefSeq" id="WP_012082903.1">
    <property type="nucleotide sequence ID" value="NC_009662.1"/>
</dbReference>
<dbReference type="SMR" id="A6Q581"/>
<dbReference type="FunCoup" id="A6Q581">
    <property type="interactions" value="451"/>
</dbReference>
<dbReference type="STRING" id="387092.NIS_1533"/>
<dbReference type="KEGG" id="nis:NIS_1533"/>
<dbReference type="eggNOG" id="COG0414">
    <property type="taxonomic scope" value="Bacteria"/>
</dbReference>
<dbReference type="HOGENOM" id="CLU_047148_0_0_7"/>
<dbReference type="InParanoid" id="A6Q581"/>
<dbReference type="OrthoDB" id="9773087at2"/>
<dbReference type="UniPathway" id="UPA00028">
    <property type="reaction ID" value="UER00005"/>
</dbReference>
<dbReference type="Proteomes" id="UP000001118">
    <property type="component" value="Chromosome"/>
</dbReference>
<dbReference type="GO" id="GO:0005829">
    <property type="term" value="C:cytosol"/>
    <property type="evidence" value="ECO:0007669"/>
    <property type="project" value="TreeGrafter"/>
</dbReference>
<dbReference type="GO" id="GO:0005524">
    <property type="term" value="F:ATP binding"/>
    <property type="evidence" value="ECO:0007669"/>
    <property type="project" value="UniProtKB-KW"/>
</dbReference>
<dbReference type="GO" id="GO:0004592">
    <property type="term" value="F:pantoate-beta-alanine ligase activity"/>
    <property type="evidence" value="ECO:0007669"/>
    <property type="project" value="UniProtKB-UniRule"/>
</dbReference>
<dbReference type="GO" id="GO:0015940">
    <property type="term" value="P:pantothenate biosynthetic process"/>
    <property type="evidence" value="ECO:0007669"/>
    <property type="project" value="UniProtKB-UniRule"/>
</dbReference>
<dbReference type="CDD" id="cd00560">
    <property type="entry name" value="PanC"/>
    <property type="match status" value="1"/>
</dbReference>
<dbReference type="Gene3D" id="3.40.50.620">
    <property type="entry name" value="HUPs"/>
    <property type="match status" value="1"/>
</dbReference>
<dbReference type="Gene3D" id="3.30.1300.10">
    <property type="entry name" value="Pantoate-beta-alanine ligase, C-terminal domain"/>
    <property type="match status" value="1"/>
</dbReference>
<dbReference type="HAMAP" id="MF_00158">
    <property type="entry name" value="PanC"/>
    <property type="match status" value="1"/>
</dbReference>
<dbReference type="InterPro" id="IPR004821">
    <property type="entry name" value="Cyt_trans-like"/>
</dbReference>
<dbReference type="InterPro" id="IPR003721">
    <property type="entry name" value="Pantoate_ligase"/>
</dbReference>
<dbReference type="InterPro" id="IPR042176">
    <property type="entry name" value="Pantoate_ligase_C"/>
</dbReference>
<dbReference type="InterPro" id="IPR014729">
    <property type="entry name" value="Rossmann-like_a/b/a_fold"/>
</dbReference>
<dbReference type="NCBIfam" id="TIGR00125">
    <property type="entry name" value="cyt_tran_rel"/>
    <property type="match status" value="1"/>
</dbReference>
<dbReference type="NCBIfam" id="TIGR00018">
    <property type="entry name" value="panC"/>
    <property type="match status" value="1"/>
</dbReference>
<dbReference type="PANTHER" id="PTHR21299">
    <property type="entry name" value="CYTIDYLATE KINASE/PANTOATE-BETA-ALANINE LIGASE"/>
    <property type="match status" value="1"/>
</dbReference>
<dbReference type="PANTHER" id="PTHR21299:SF1">
    <property type="entry name" value="PANTOATE--BETA-ALANINE LIGASE"/>
    <property type="match status" value="1"/>
</dbReference>
<dbReference type="Pfam" id="PF02569">
    <property type="entry name" value="Pantoate_ligase"/>
    <property type="match status" value="1"/>
</dbReference>
<dbReference type="SUPFAM" id="SSF52374">
    <property type="entry name" value="Nucleotidylyl transferase"/>
    <property type="match status" value="1"/>
</dbReference>
<reference key="1">
    <citation type="journal article" date="2007" name="Proc. Natl. Acad. Sci. U.S.A.">
        <title>Deep-sea vent epsilon-proteobacterial genomes provide insights into emergence of pathogens.</title>
        <authorList>
            <person name="Nakagawa S."/>
            <person name="Takaki Y."/>
            <person name="Shimamura S."/>
            <person name="Reysenbach A.-L."/>
            <person name="Takai K."/>
            <person name="Horikoshi K."/>
        </authorList>
    </citation>
    <scope>NUCLEOTIDE SEQUENCE [LARGE SCALE GENOMIC DNA]</scope>
    <source>
        <strain>SB155-2</strain>
    </source>
</reference>
<accession>A6Q581</accession>
<name>PANC_NITSB</name>
<sequence length="273" mass="31241">MQIVHTPRELKEARIALKGSVGFVPTMGALHQGHLSLIEKSKEHNDYTIVSVFVNPTQFLPGEDFEKYPRRYEADKKICELAGVDILFMPQPDTIYSEDEVLVKAPHQKGYVLEGHFRPGHFDGVLQVVNKLFHIVLPTRAYFGKKDAQQLYLIQKMVQDFFMDIEIVPCEIVRDNDGLALSSRNVYLSDAERKKALLISKSLKRAAKMVQSGILDIQEIQKEMQNILQDLKVEYIAFVDRDFRPLQKIQIGKTIILVAAYVGSTRLIDNIWL</sequence>
<protein>
    <recommendedName>
        <fullName evidence="1">Pantothenate synthetase</fullName>
        <shortName evidence="1">PS</shortName>
        <ecNumber evidence="1">6.3.2.1</ecNumber>
    </recommendedName>
    <alternativeName>
        <fullName evidence="1">Pantoate--beta-alanine ligase</fullName>
    </alternativeName>
    <alternativeName>
        <fullName evidence="1">Pantoate-activating enzyme</fullName>
    </alternativeName>
</protein>
<proteinExistence type="inferred from homology"/>
<gene>
    <name evidence="1" type="primary">panC</name>
    <name type="ordered locus">NIS_1533</name>
</gene>
<keyword id="KW-0067">ATP-binding</keyword>
<keyword id="KW-0963">Cytoplasm</keyword>
<keyword id="KW-0436">Ligase</keyword>
<keyword id="KW-0547">Nucleotide-binding</keyword>
<keyword id="KW-0566">Pantothenate biosynthesis</keyword>
<keyword id="KW-1185">Reference proteome</keyword>
<comment type="function">
    <text evidence="1">Catalyzes the condensation of pantoate with beta-alanine in an ATP-dependent reaction via a pantoyl-adenylate intermediate.</text>
</comment>
<comment type="catalytic activity">
    <reaction evidence="1">
        <text>(R)-pantoate + beta-alanine + ATP = (R)-pantothenate + AMP + diphosphate + H(+)</text>
        <dbReference type="Rhea" id="RHEA:10912"/>
        <dbReference type="ChEBI" id="CHEBI:15378"/>
        <dbReference type="ChEBI" id="CHEBI:15980"/>
        <dbReference type="ChEBI" id="CHEBI:29032"/>
        <dbReference type="ChEBI" id="CHEBI:30616"/>
        <dbReference type="ChEBI" id="CHEBI:33019"/>
        <dbReference type="ChEBI" id="CHEBI:57966"/>
        <dbReference type="ChEBI" id="CHEBI:456215"/>
        <dbReference type="EC" id="6.3.2.1"/>
    </reaction>
</comment>
<comment type="pathway">
    <text evidence="1">Cofactor biosynthesis; (R)-pantothenate biosynthesis; (R)-pantothenate from (R)-pantoate and beta-alanine: step 1/1.</text>
</comment>
<comment type="subunit">
    <text evidence="1">Homodimer.</text>
</comment>
<comment type="subcellular location">
    <subcellularLocation>
        <location evidence="1">Cytoplasm</location>
    </subcellularLocation>
</comment>
<comment type="miscellaneous">
    <text evidence="1">The reaction proceeds by a bi uni uni bi ping pong mechanism.</text>
</comment>
<comment type="similarity">
    <text evidence="1">Belongs to the pantothenate synthetase family.</text>
</comment>
<feature type="chain" id="PRO_1000076858" description="Pantothenate synthetase">
    <location>
        <begin position="1"/>
        <end position="273"/>
    </location>
</feature>
<feature type="active site" description="Proton donor" evidence="1">
    <location>
        <position position="34"/>
    </location>
</feature>
<feature type="binding site" evidence="1">
    <location>
        <begin position="27"/>
        <end position="34"/>
    </location>
    <ligand>
        <name>ATP</name>
        <dbReference type="ChEBI" id="CHEBI:30616"/>
    </ligand>
</feature>
<feature type="binding site" evidence="1">
    <location>
        <position position="58"/>
    </location>
    <ligand>
        <name>(R)-pantoate</name>
        <dbReference type="ChEBI" id="CHEBI:15980"/>
    </ligand>
</feature>
<feature type="binding site" evidence="1">
    <location>
        <position position="58"/>
    </location>
    <ligand>
        <name>beta-alanine</name>
        <dbReference type="ChEBI" id="CHEBI:57966"/>
    </ligand>
</feature>
<feature type="binding site" evidence="1">
    <location>
        <begin position="144"/>
        <end position="147"/>
    </location>
    <ligand>
        <name>ATP</name>
        <dbReference type="ChEBI" id="CHEBI:30616"/>
    </ligand>
</feature>
<feature type="binding site" evidence="1">
    <location>
        <position position="150"/>
    </location>
    <ligand>
        <name>(R)-pantoate</name>
        <dbReference type="ChEBI" id="CHEBI:15980"/>
    </ligand>
</feature>
<feature type="binding site" evidence="1">
    <location>
        <position position="173"/>
    </location>
    <ligand>
        <name>ATP</name>
        <dbReference type="ChEBI" id="CHEBI:30616"/>
    </ligand>
</feature>
<feature type="binding site" evidence="1">
    <location>
        <begin position="181"/>
        <end position="184"/>
    </location>
    <ligand>
        <name>ATP</name>
        <dbReference type="ChEBI" id="CHEBI:30616"/>
    </ligand>
</feature>